<reference key="1">
    <citation type="journal article" date="2008" name="Antimicrob. Agents Chemother.">
        <title>Whole-genome pyrosequencing of an epidemic multidrug-resistant Acinetobacter baumannii strain belonging to the European clone II group.</title>
        <authorList>
            <person name="Iacono M."/>
            <person name="Villa L."/>
            <person name="Fortini D."/>
            <person name="Bordoni R."/>
            <person name="Imperi F."/>
            <person name="Bonnal R.J."/>
            <person name="Sicheritz-Ponten T."/>
            <person name="De Bellis G."/>
            <person name="Visca P."/>
            <person name="Cassone A."/>
            <person name="Carattoli A."/>
        </authorList>
    </citation>
    <scope>NUCLEOTIDE SEQUENCE [LARGE SCALE GENOMIC DNA]</scope>
    <source>
        <strain>ACICU</strain>
    </source>
</reference>
<comment type="function">
    <text evidence="1">Specifically methylates the guanine in position 2445 (m2G2445) and the guanine in position 2069 (m7G2069) of 23S rRNA.</text>
</comment>
<comment type="catalytic activity">
    <reaction evidence="1">
        <text>guanosine(2445) in 23S rRNA + S-adenosyl-L-methionine = N(2)-methylguanosine(2445) in 23S rRNA + S-adenosyl-L-homocysteine + H(+)</text>
        <dbReference type="Rhea" id="RHEA:42740"/>
        <dbReference type="Rhea" id="RHEA-COMP:10215"/>
        <dbReference type="Rhea" id="RHEA-COMP:10216"/>
        <dbReference type="ChEBI" id="CHEBI:15378"/>
        <dbReference type="ChEBI" id="CHEBI:57856"/>
        <dbReference type="ChEBI" id="CHEBI:59789"/>
        <dbReference type="ChEBI" id="CHEBI:74269"/>
        <dbReference type="ChEBI" id="CHEBI:74481"/>
        <dbReference type="EC" id="2.1.1.173"/>
    </reaction>
</comment>
<comment type="catalytic activity">
    <reaction evidence="1">
        <text>guanosine(2069) in 23S rRNA + S-adenosyl-L-methionine = N(2)-methylguanosine(2069) in 23S rRNA + S-adenosyl-L-homocysteine + H(+)</text>
        <dbReference type="Rhea" id="RHEA:43772"/>
        <dbReference type="Rhea" id="RHEA-COMP:10688"/>
        <dbReference type="Rhea" id="RHEA-COMP:10689"/>
        <dbReference type="ChEBI" id="CHEBI:15378"/>
        <dbReference type="ChEBI" id="CHEBI:57856"/>
        <dbReference type="ChEBI" id="CHEBI:59789"/>
        <dbReference type="ChEBI" id="CHEBI:74269"/>
        <dbReference type="ChEBI" id="CHEBI:74481"/>
        <dbReference type="EC" id="2.1.1.264"/>
    </reaction>
</comment>
<comment type="subcellular location">
    <subcellularLocation>
        <location evidence="1">Cytoplasm</location>
    </subcellularLocation>
</comment>
<comment type="similarity">
    <text evidence="1">Belongs to the methyltransferase superfamily. RlmKL family.</text>
</comment>
<comment type="sequence caution" evidence="2">
    <conflict type="erroneous initiation">
        <sequence resource="EMBL-CDS" id="ACC56480"/>
    </conflict>
    <text>Extended N-terminus.</text>
</comment>
<accession>B2HWX8</accession>
<evidence type="ECO:0000255" key="1">
    <source>
        <dbReference type="HAMAP-Rule" id="MF_01858"/>
    </source>
</evidence>
<evidence type="ECO:0000305" key="2"/>
<organism>
    <name type="scientific">Acinetobacter baumannii (strain ACICU)</name>
    <dbReference type="NCBI Taxonomy" id="405416"/>
    <lineage>
        <taxon>Bacteria</taxon>
        <taxon>Pseudomonadati</taxon>
        <taxon>Pseudomonadota</taxon>
        <taxon>Gammaproteobacteria</taxon>
        <taxon>Moraxellales</taxon>
        <taxon>Moraxellaceae</taxon>
        <taxon>Acinetobacter</taxon>
        <taxon>Acinetobacter calcoaceticus/baumannii complex</taxon>
    </lineage>
</organism>
<protein>
    <recommendedName>
        <fullName evidence="1">Ribosomal RNA large subunit methyltransferase K/L</fullName>
    </recommendedName>
    <domain>
        <recommendedName>
            <fullName evidence="1">23S rRNA m2G2445 methyltransferase</fullName>
            <ecNumber evidence="1">2.1.1.173</ecNumber>
        </recommendedName>
        <alternativeName>
            <fullName evidence="1">rRNA (guanine-N(2)-)-methyltransferase RlmL</fullName>
        </alternativeName>
    </domain>
    <domain>
        <recommendedName>
            <fullName evidence="1">23S rRNA m7G2069 methyltransferase</fullName>
            <ecNumber evidence="1">2.1.1.264</ecNumber>
        </recommendedName>
        <alternativeName>
            <fullName evidence="1">rRNA (guanine-N(7)-)-methyltransferase RlmK</fullName>
        </alternativeName>
    </domain>
</protein>
<sequence>MNTSLRLNHYWITCADGLETLLQEEIEQLGTKVTERKAGRLIIEGTLEHAYRICMWSRLASRVLLPIHTYELERTHDARDVAEELYEGAISFDWSLIFAPQSTFAIRLHAEREIKVNTQFATLRVKDGVVDSFMEAVGRRPSIDTKQPEITLYVLAGKTEHTYCLDLSGDSLHKRGYRRFMTDAPIKENLAAAILQKAKLKERNPEIVLDPMCGSGTFIIEALMILTDRAPGLVRRFGFNGWHGHDRELWLSLKAEAAERHEKALEQPLPKFYAYDADWEAVKATRENIIAAGFEKLLGDIQIEERTLADWPDFGAENKTAFIVTNPPYGERLGDKASNRSLYLGLSALLQKNFPNQYAAIIAAQIEQADVLAFEAPETLRLMNGKLPIYVRFGTVKPEKVTQPFLANWQAQPVEMEEAQDFANRLQKNMTALKKWATKENIYCLRLYDADLPDFNLAVDLYGDRLHVQEYAPPKKIDPEKAKKRFNLALAAIRAVTGLNRDAIFIKTRARQTGTNQYTKQSTANKRFIVQEGKAKILVNLTDYLDTGLFLDHRQMRLRIAKEARGKHFLNLYSYTSTASLHAALGGAASTTSVDLSNTYLSWSKENFVLNGLTVDHADEQHMFFASDCFEWLKEGHEQYDLIFIDPPTFSNSKKFHGTFDVQRDHVSLIKRAMNRLTSEGTLYFSNNYRGFEMDEEIEALYEVEEITSETIGPDFKRNQKIHRAWKIQHPGLN</sequence>
<dbReference type="EC" id="2.1.1.173" evidence="1"/>
<dbReference type="EC" id="2.1.1.264" evidence="1"/>
<dbReference type="EMBL" id="CP000863">
    <property type="protein sequence ID" value="ACC56480.1"/>
    <property type="status" value="ALT_INIT"/>
    <property type="molecule type" value="Genomic_DNA"/>
</dbReference>
<dbReference type="SMR" id="B2HWX8"/>
<dbReference type="KEGG" id="abc:ACICU_01168"/>
<dbReference type="HOGENOM" id="CLU_014042_2_0_6"/>
<dbReference type="Proteomes" id="UP000008839">
    <property type="component" value="Chromosome"/>
</dbReference>
<dbReference type="GO" id="GO:0005737">
    <property type="term" value="C:cytoplasm"/>
    <property type="evidence" value="ECO:0007669"/>
    <property type="project" value="UniProtKB-SubCell"/>
</dbReference>
<dbReference type="GO" id="GO:0052915">
    <property type="term" value="F:23S rRNA (guanine(2445)-N(2))-methyltransferase activity"/>
    <property type="evidence" value="ECO:0007669"/>
    <property type="project" value="UniProtKB-UniRule"/>
</dbReference>
<dbReference type="GO" id="GO:0003723">
    <property type="term" value="F:RNA binding"/>
    <property type="evidence" value="ECO:0007669"/>
    <property type="project" value="UniProtKB-KW"/>
</dbReference>
<dbReference type="GO" id="GO:0070043">
    <property type="term" value="F:rRNA (guanine-N7-)-methyltransferase activity"/>
    <property type="evidence" value="ECO:0007669"/>
    <property type="project" value="UniProtKB-UniRule"/>
</dbReference>
<dbReference type="CDD" id="cd02440">
    <property type="entry name" value="AdoMet_MTases"/>
    <property type="match status" value="1"/>
</dbReference>
<dbReference type="CDD" id="cd11715">
    <property type="entry name" value="THUMP_AdoMetMT"/>
    <property type="match status" value="1"/>
</dbReference>
<dbReference type="Gene3D" id="3.30.2130.30">
    <property type="match status" value="1"/>
</dbReference>
<dbReference type="Gene3D" id="3.30.750.80">
    <property type="entry name" value="RNA methyltransferase domain (HRMD) like"/>
    <property type="match status" value="1"/>
</dbReference>
<dbReference type="Gene3D" id="3.40.50.150">
    <property type="entry name" value="Vaccinia Virus protein VP39"/>
    <property type="match status" value="2"/>
</dbReference>
<dbReference type="HAMAP" id="MF_01858">
    <property type="entry name" value="23SrRNA_methyltr_KL"/>
    <property type="match status" value="1"/>
</dbReference>
<dbReference type="InterPro" id="IPR017244">
    <property type="entry name" value="23SrRNA_methyltr_KL"/>
</dbReference>
<dbReference type="InterPro" id="IPR002052">
    <property type="entry name" value="DNA_methylase_N6_adenine_CS"/>
</dbReference>
<dbReference type="InterPro" id="IPR000241">
    <property type="entry name" value="RlmKL-like_Mtase"/>
</dbReference>
<dbReference type="InterPro" id="IPR053943">
    <property type="entry name" value="RlmKL-like_Mtase_CS"/>
</dbReference>
<dbReference type="InterPro" id="IPR054170">
    <property type="entry name" value="RlmL_1st"/>
</dbReference>
<dbReference type="InterPro" id="IPR019614">
    <property type="entry name" value="SAM-dep_methyl-trfase"/>
</dbReference>
<dbReference type="InterPro" id="IPR029063">
    <property type="entry name" value="SAM-dependent_MTases_sf"/>
</dbReference>
<dbReference type="InterPro" id="IPR004114">
    <property type="entry name" value="THUMP_dom"/>
</dbReference>
<dbReference type="NCBIfam" id="NF008748">
    <property type="entry name" value="PRK11783.1"/>
    <property type="match status" value="1"/>
</dbReference>
<dbReference type="PANTHER" id="PTHR47313">
    <property type="entry name" value="RIBOSOMAL RNA LARGE SUBUNIT METHYLTRANSFERASE K/L"/>
    <property type="match status" value="1"/>
</dbReference>
<dbReference type="PANTHER" id="PTHR47313:SF1">
    <property type="entry name" value="RIBOSOMAL RNA LARGE SUBUNIT METHYLTRANSFERASE K_L"/>
    <property type="match status" value="1"/>
</dbReference>
<dbReference type="Pfam" id="PF10672">
    <property type="entry name" value="Methyltrans_SAM"/>
    <property type="match status" value="1"/>
</dbReference>
<dbReference type="Pfam" id="PF22020">
    <property type="entry name" value="RlmL_1st"/>
    <property type="match status" value="1"/>
</dbReference>
<dbReference type="Pfam" id="PF02926">
    <property type="entry name" value="THUMP"/>
    <property type="match status" value="1"/>
</dbReference>
<dbReference type="Pfam" id="PF01170">
    <property type="entry name" value="UPF0020"/>
    <property type="match status" value="1"/>
</dbReference>
<dbReference type="PIRSF" id="PIRSF037618">
    <property type="entry name" value="RNA_Mtase_bacteria_prd"/>
    <property type="match status" value="1"/>
</dbReference>
<dbReference type="PRINTS" id="PR00507">
    <property type="entry name" value="N12N6MTFRASE"/>
</dbReference>
<dbReference type="SMART" id="SM00981">
    <property type="entry name" value="THUMP"/>
    <property type="match status" value="1"/>
</dbReference>
<dbReference type="SUPFAM" id="SSF53335">
    <property type="entry name" value="S-adenosyl-L-methionine-dependent methyltransferases"/>
    <property type="match status" value="2"/>
</dbReference>
<dbReference type="PROSITE" id="PS51165">
    <property type="entry name" value="THUMP"/>
    <property type="match status" value="1"/>
</dbReference>
<dbReference type="PROSITE" id="PS01261">
    <property type="entry name" value="UPF0020"/>
    <property type="match status" value="1"/>
</dbReference>
<proteinExistence type="inferred from homology"/>
<name>RLMKL_ACIBC</name>
<keyword id="KW-0963">Cytoplasm</keyword>
<keyword id="KW-0489">Methyltransferase</keyword>
<keyword id="KW-0694">RNA-binding</keyword>
<keyword id="KW-0698">rRNA processing</keyword>
<keyword id="KW-0949">S-adenosyl-L-methionine</keyword>
<keyword id="KW-0808">Transferase</keyword>
<feature type="chain" id="PRO_0000366714" description="Ribosomal RNA large subunit methyltransferase K/L">
    <location>
        <begin position="1"/>
        <end position="734"/>
    </location>
</feature>
<feature type="domain" description="THUMP" evidence="1">
    <location>
        <begin position="49"/>
        <end position="167"/>
    </location>
</feature>
<gene>
    <name evidence="1" type="primary">rlmL</name>
    <name type="ordered locus">ACICU_01168</name>
</gene>